<protein>
    <recommendedName>
        <fullName>Probable methanogen homoaconitase large subunit</fullName>
        <shortName>HACN</shortName>
        <ecNumber evidence="1">4.2.1.114</ecNumber>
    </recommendedName>
    <alternativeName>
        <fullName>Homoaconitate hydratase</fullName>
    </alternativeName>
</protein>
<name>HACA_METTH</name>
<accession>O27668</accession>
<dbReference type="EC" id="4.2.1.114" evidence="1"/>
<dbReference type="EMBL" id="AE000666">
    <property type="protein sequence ID" value="AAB86104.1"/>
    <property type="molecule type" value="Genomic_DNA"/>
</dbReference>
<dbReference type="PIR" id="A69085">
    <property type="entry name" value="A69085"/>
</dbReference>
<dbReference type="SMR" id="O27668"/>
<dbReference type="STRING" id="187420.MTH_1631"/>
<dbReference type="PaxDb" id="187420-MTH_1631"/>
<dbReference type="EnsemblBacteria" id="AAB86104">
    <property type="protein sequence ID" value="AAB86104"/>
    <property type="gene ID" value="MTH_1631"/>
</dbReference>
<dbReference type="KEGG" id="mth:MTH_1631"/>
<dbReference type="PATRIC" id="fig|187420.15.peg.1595"/>
<dbReference type="HOGENOM" id="CLU_006714_3_4_2"/>
<dbReference type="InParanoid" id="O27668"/>
<dbReference type="UniPathway" id="UPA00919"/>
<dbReference type="Proteomes" id="UP000005223">
    <property type="component" value="Chromosome"/>
</dbReference>
<dbReference type="GO" id="GO:0003861">
    <property type="term" value="F:3-isopropylmalate dehydratase activity"/>
    <property type="evidence" value="ECO:0007669"/>
    <property type="project" value="UniProtKB-UniRule"/>
</dbReference>
<dbReference type="GO" id="GO:0051539">
    <property type="term" value="F:4 iron, 4 sulfur cluster binding"/>
    <property type="evidence" value="ECO:0007669"/>
    <property type="project" value="UniProtKB-KW"/>
</dbReference>
<dbReference type="GO" id="GO:0004409">
    <property type="term" value="F:homoaconitate hydratase activity"/>
    <property type="evidence" value="ECO:0007669"/>
    <property type="project" value="RHEA"/>
</dbReference>
<dbReference type="GO" id="GO:0046872">
    <property type="term" value="F:metal ion binding"/>
    <property type="evidence" value="ECO:0007669"/>
    <property type="project" value="UniProtKB-KW"/>
</dbReference>
<dbReference type="GO" id="GO:0009098">
    <property type="term" value="P:L-leucine biosynthetic process"/>
    <property type="evidence" value="ECO:0007669"/>
    <property type="project" value="UniProtKB-UniRule"/>
</dbReference>
<dbReference type="CDD" id="cd01583">
    <property type="entry name" value="IPMI"/>
    <property type="match status" value="1"/>
</dbReference>
<dbReference type="Gene3D" id="3.30.499.10">
    <property type="entry name" value="Aconitase, domain 3"/>
    <property type="match status" value="2"/>
</dbReference>
<dbReference type="HAMAP" id="MF_01027">
    <property type="entry name" value="LeuC_type2"/>
    <property type="match status" value="1"/>
</dbReference>
<dbReference type="InterPro" id="IPR015931">
    <property type="entry name" value="Acnase/IPM_dHydase_lsu_aba_1/3"/>
</dbReference>
<dbReference type="InterPro" id="IPR001030">
    <property type="entry name" value="Acoase/IPM_deHydtase_lsu_aba"/>
</dbReference>
<dbReference type="InterPro" id="IPR018136">
    <property type="entry name" value="Aconitase_4Fe-4S_BS"/>
</dbReference>
<dbReference type="InterPro" id="IPR036008">
    <property type="entry name" value="Aconitase_4Fe-4S_dom"/>
</dbReference>
<dbReference type="InterPro" id="IPR011826">
    <property type="entry name" value="HAcnase/IPMdehydase_lsu_prok"/>
</dbReference>
<dbReference type="InterPro" id="IPR006251">
    <property type="entry name" value="Homoacnase/IPMdehydase_lsu"/>
</dbReference>
<dbReference type="InterPro" id="IPR050067">
    <property type="entry name" value="IPM_dehydratase_rel_enz"/>
</dbReference>
<dbReference type="InterPro" id="IPR033941">
    <property type="entry name" value="IPMI_cat"/>
</dbReference>
<dbReference type="NCBIfam" id="TIGR01343">
    <property type="entry name" value="hacA_fam"/>
    <property type="match status" value="1"/>
</dbReference>
<dbReference type="NCBIfam" id="NF040615">
    <property type="entry name" value="HacA_Meth"/>
    <property type="match status" value="1"/>
</dbReference>
<dbReference type="NCBIfam" id="TIGR02086">
    <property type="entry name" value="IPMI_arch"/>
    <property type="match status" value="1"/>
</dbReference>
<dbReference type="NCBIfam" id="NF001614">
    <property type="entry name" value="PRK00402.1"/>
    <property type="match status" value="1"/>
</dbReference>
<dbReference type="PANTHER" id="PTHR43822:SF2">
    <property type="entry name" value="HOMOACONITASE, MITOCHONDRIAL"/>
    <property type="match status" value="1"/>
</dbReference>
<dbReference type="PANTHER" id="PTHR43822">
    <property type="entry name" value="HOMOACONITASE, MITOCHONDRIAL-RELATED"/>
    <property type="match status" value="1"/>
</dbReference>
<dbReference type="Pfam" id="PF00330">
    <property type="entry name" value="Aconitase"/>
    <property type="match status" value="2"/>
</dbReference>
<dbReference type="PRINTS" id="PR00415">
    <property type="entry name" value="ACONITASE"/>
</dbReference>
<dbReference type="SUPFAM" id="SSF53732">
    <property type="entry name" value="Aconitase iron-sulfur domain"/>
    <property type="match status" value="1"/>
</dbReference>
<dbReference type="PROSITE" id="PS00450">
    <property type="entry name" value="ACONITASE_1"/>
    <property type="match status" value="1"/>
</dbReference>
<dbReference type="PROSITE" id="PS01244">
    <property type="entry name" value="ACONITASE_2"/>
    <property type="match status" value="1"/>
</dbReference>
<reference key="1">
    <citation type="journal article" date="1997" name="J. Bacteriol.">
        <title>Complete genome sequence of Methanobacterium thermoautotrophicum deltaH: functional analysis and comparative genomics.</title>
        <authorList>
            <person name="Smith D.R."/>
            <person name="Doucette-Stamm L.A."/>
            <person name="Deloughery C."/>
            <person name="Lee H.-M."/>
            <person name="Dubois J."/>
            <person name="Aldredge T."/>
            <person name="Bashirzadeh R."/>
            <person name="Blakely D."/>
            <person name="Cook R."/>
            <person name="Gilbert K."/>
            <person name="Harrison D."/>
            <person name="Hoang L."/>
            <person name="Keagle P."/>
            <person name="Lumm W."/>
            <person name="Pothier B."/>
            <person name="Qiu D."/>
            <person name="Spadafora R."/>
            <person name="Vicare R."/>
            <person name="Wang Y."/>
            <person name="Wierzbowski J."/>
            <person name="Gibson R."/>
            <person name="Jiwani N."/>
            <person name="Caruso A."/>
            <person name="Bush D."/>
            <person name="Safer H."/>
            <person name="Patwell D."/>
            <person name="Prabhakar S."/>
            <person name="McDougall S."/>
            <person name="Shimer G."/>
            <person name="Goyal A."/>
            <person name="Pietrovski S."/>
            <person name="Church G.M."/>
            <person name="Daniels C.J."/>
            <person name="Mao J.-I."/>
            <person name="Rice P."/>
            <person name="Noelling J."/>
            <person name="Reeve J.N."/>
        </authorList>
    </citation>
    <scope>NUCLEOTIDE SEQUENCE [LARGE SCALE GENOMIC DNA]</scope>
    <source>
        <strain>ATCC 29096 / DSM 1053 / JCM 10044 / NBRC 100330 / Delta H</strain>
    </source>
</reference>
<gene>
    <name type="primary">hacA</name>
    <name type="ordered locus">MTH_1631</name>
</gene>
<sequence length="428" mass="46448">MVKMNMTEKILAEAAGLREVTPGEIIEARVDLAMTHDGTSPPTIRTFRDIASRGGPARVWDPERIVMVFDHNVPANTIGAAEFQRVTREFAREQGIVNIFQNAAGICHQVLPERGFVRPGMVIVGADSHTCTYGAFGAFATGMGATDMAMVFATGKTWFMVPEAMRIEVTGEPEGHVYAKDVILHIIGEIGVDGATYRSVEFTGDTIESMDVSGRMTICNMAVEMGAKNGIMEPNRQTLDYVRARTGREFRVYSSDEDSQYLEDHHFDVSDLEPQVACPDDVDNVYPVHRVEGTHIDEAFLGSCTNGRYEDLKIAAEVIGDRRVHEDVRFIVSPASREIYLKALEDGIIETFIRAGAIVCNPGCGPCLGAHMGVLAPGEVSIATTNRNFRGRMGDPASSVYLANPAVVAESAIEGVISAPQQEAGNGC</sequence>
<comment type="function">
    <text evidence="1">Component of a hydro-lyase with broad substrate specificity for cis-unsaturated tricarboxylic acids. Catalyzes both the reversible dehydration of (R)-homocitrate ((R)-2-hydroxybutane-1,2,4-tricarboxylate) to produce cis-homoaconitate ((Z)-but-1-ene-1,2,4-tricarboxylate), and its hydration to homoisocitrate ((1R,2S)-1-hydroxybutane-1,2,4-tricarboxylate). Is also able to hydrate the analogous longer chain substrates cis-homo(2)-aconitate, cis-homo(3)-aconitate. These reactions are part of the biosynthesis pathway of coenzyme B.</text>
</comment>
<comment type="catalytic activity">
    <reaction evidence="1">
        <text>(2R)-homocitrate = (2R,3S)-homoisocitrate</text>
        <dbReference type="Rhea" id="RHEA:32303"/>
        <dbReference type="ChEBI" id="CHEBI:15404"/>
        <dbReference type="ChEBI" id="CHEBI:58884"/>
        <dbReference type="EC" id="4.2.1.114"/>
    </reaction>
    <physiologicalReaction direction="left-to-right" evidence="1">
        <dbReference type="Rhea" id="RHEA:32304"/>
    </physiologicalReaction>
</comment>
<comment type="catalytic activity">
    <reaction evidence="1">
        <text>(2R)-homocitrate = cis-homoaconitate + H2O</text>
        <dbReference type="Rhea" id="RHEA:26101"/>
        <dbReference type="ChEBI" id="CHEBI:15377"/>
        <dbReference type="ChEBI" id="CHEBI:58174"/>
        <dbReference type="ChEBI" id="CHEBI:58884"/>
    </reaction>
    <physiologicalReaction direction="left-to-right" evidence="1">
        <dbReference type="Rhea" id="RHEA:26102"/>
    </physiologicalReaction>
</comment>
<comment type="catalytic activity">
    <reaction evidence="1">
        <text>(2R,3S)-homoisocitrate = cis-homoaconitate + H2O</text>
        <dbReference type="Rhea" id="RHEA:15485"/>
        <dbReference type="ChEBI" id="CHEBI:15377"/>
        <dbReference type="ChEBI" id="CHEBI:15404"/>
        <dbReference type="ChEBI" id="CHEBI:58174"/>
    </reaction>
    <physiologicalReaction direction="right-to-left" evidence="1">
        <dbReference type="Rhea" id="RHEA:15487"/>
    </physiologicalReaction>
</comment>
<comment type="catalytic activity">
    <reaction evidence="1">
        <text>cis-(homo)2aconitate + H2O = (2R,3S)-iso(homo)2citrate</text>
        <dbReference type="Rhea" id="RHEA:68416"/>
        <dbReference type="ChEBI" id="CHEBI:15377"/>
        <dbReference type="ChEBI" id="CHEBI:72710"/>
        <dbReference type="ChEBI" id="CHEBI:72722"/>
        <dbReference type="EC" id="4.2.1.114"/>
    </reaction>
    <physiologicalReaction direction="left-to-right" evidence="1">
        <dbReference type="Rhea" id="RHEA:68417"/>
    </physiologicalReaction>
</comment>
<comment type="catalytic activity">
    <reaction evidence="1">
        <text>cis-(homo)3aconitate + H2O = (2R,3S)-iso(homo)3citrate</text>
        <dbReference type="Rhea" id="RHEA:68420"/>
        <dbReference type="ChEBI" id="CHEBI:15377"/>
        <dbReference type="ChEBI" id="CHEBI:72712"/>
        <dbReference type="ChEBI" id="CHEBI:177881"/>
        <dbReference type="EC" id="4.2.1.114"/>
    </reaction>
    <physiologicalReaction direction="left-to-right" evidence="1">
        <dbReference type="Rhea" id="RHEA:68421"/>
    </physiologicalReaction>
</comment>
<comment type="pathway">
    <text evidence="1">Organic acid metabolism; 2-oxosuberate biosynthesis.</text>
</comment>
<comment type="subunit">
    <text evidence="1">Heterotetramer of 2 HacA and 2 HacB proteins.</text>
</comment>
<comment type="similarity">
    <text evidence="2">Belongs to the aconitase/IPM isomerase family. LeuC type 2 subfamily.</text>
</comment>
<proteinExistence type="inferred from homology"/>
<organism>
    <name type="scientific">Methanothermobacter thermautotrophicus (strain ATCC 29096 / DSM 1053 / JCM 10044 / NBRC 100330 / Delta H)</name>
    <name type="common">Methanobacterium thermoautotrophicum</name>
    <dbReference type="NCBI Taxonomy" id="187420"/>
    <lineage>
        <taxon>Archaea</taxon>
        <taxon>Methanobacteriati</taxon>
        <taxon>Methanobacteriota</taxon>
        <taxon>Methanomada group</taxon>
        <taxon>Methanobacteria</taxon>
        <taxon>Methanobacteriales</taxon>
        <taxon>Methanobacteriaceae</taxon>
        <taxon>Methanothermobacter</taxon>
    </lineage>
</organism>
<evidence type="ECO:0000250" key="1">
    <source>
        <dbReference type="UniProtKB" id="Q58409"/>
    </source>
</evidence>
<evidence type="ECO:0000255" key="2">
    <source>
        <dbReference type="HAMAP-Rule" id="MF_01027"/>
    </source>
</evidence>
<feature type="chain" id="PRO_0000076875" description="Probable methanogen homoaconitase large subunit">
    <location>
        <begin position="1"/>
        <end position="428"/>
    </location>
</feature>
<feature type="binding site" evidence="2">
    <location>
        <position position="304"/>
    </location>
    <ligand>
        <name>[4Fe-4S] cluster</name>
        <dbReference type="ChEBI" id="CHEBI:49883"/>
    </ligand>
</feature>
<feature type="binding site" evidence="2">
    <location>
        <position position="364"/>
    </location>
    <ligand>
        <name>[4Fe-4S] cluster</name>
        <dbReference type="ChEBI" id="CHEBI:49883"/>
    </ligand>
</feature>
<feature type="binding site" evidence="2">
    <location>
        <position position="367"/>
    </location>
    <ligand>
        <name>[4Fe-4S] cluster</name>
        <dbReference type="ChEBI" id="CHEBI:49883"/>
    </ligand>
</feature>
<keyword id="KW-0004">4Fe-4S</keyword>
<keyword id="KW-0408">Iron</keyword>
<keyword id="KW-0411">Iron-sulfur</keyword>
<keyword id="KW-0456">Lyase</keyword>
<keyword id="KW-0479">Metal-binding</keyword>
<keyword id="KW-1185">Reference proteome</keyword>